<keyword id="KW-0012">Acyltransferase</keyword>
<keyword id="KW-1003">Cell membrane</keyword>
<keyword id="KW-0444">Lipid biosynthesis</keyword>
<keyword id="KW-0443">Lipid metabolism</keyword>
<keyword id="KW-0472">Membrane</keyword>
<keyword id="KW-0594">Phospholipid biosynthesis</keyword>
<keyword id="KW-1208">Phospholipid metabolism</keyword>
<keyword id="KW-1185">Reference proteome</keyword>
<keyword id="KW-0808">Transferase</keyword>
<accession>A5U5H8</accession>
<evidence type="ECO:0000255" key="1">
    <source>
        <dbReference type="HAMAP-Rule" id="MF_00393"/>
    </source>
</evidence>
<gene>
    <name evidence="1" type="primary">plsB</name>
    <name type="ordered locus">MRA_2507</name>
</gene>
<organism>
    <name type="scientific">Mycobacterium tuberculosis (strain ATCC 25177 / H37Ra)</name>
    <dbReference type="NCBI Taxonomy" id="419947"/>
    <lineage>
        <taxon>Bacteria</taxon>
        <taxon>Bacillati</taxon>
        <taxon>Actinomycetota</taxon>
        <taxon>Actinomycetes</taxon>
        <taxon>Mycobacteriales</taxon>
        <taxon>Mycobacteriaceae</taxon>
        <taxon>Mycobacterium</taxon>
        <taxon>Mycobacterium tuberculosis complex</taxon>
    </lineage>
</organism>
<reference key="1">
    <citation type="journal article" date="2008" name="PLoS ONE">
        <title>Genetic basis of virulence attenuation revealed by comparative genomic analysis of Mycobacterium tuberculosis strain H37Ra versus H37Rv.</title>
        <authorList>
            <person name="Zheng H."/>
            <person name="Lu L."/>
            <person name="Wang B."/>
            <person name="Pu S."/>
            <person name="Zhang X."/>
            <person name="Zhu G."/>
            <person name="Shi W."/>
            <person name="Zhang L."/>
            <person name="Wang H."/>
            <person name="Wang S."/>
            <person name="Zhao G."/>
            <person name="Zhang Y."/>
        </authorList>
    </citation>
    <scope>NUCLEOTIDE SEQUENCE [LARGE SCALE GENOMIC DNA]</scope>
    <source>
        <strain>ATCC 25177 / H37Ra</strain>
    </source>
</reference>
<sequence length="789" mass="88315">MTKPAADASAVLTAEDTLVLASTATPVEMELIMGWLGQQRARHPDSKFDILKLPPRNAPPAALTALVEQLEPGFASSPQSGEDRSIVPVRVIWLPPADRSRAGKVAALLPGRDPYHPSQRQQRRILRTDPRRARVVAGESAKVSELRQQWRDTTVAEHKRDFAQFVSRRALLALARAEYRILGPQYKSPRLVKPEMLASARFRAGLDRIPGATVEDAGKMLDELSTGWSQVSVDLVSVLGRLASRGFDPEFDYDEYQVAAMRAALEAHPAVLLFSHRSYIDGVVVPVAMQDNRLPPVHMFGGINLSFGLMGPLMRRSGMIFIRRNIGNDPLYKYVLKEYVGYVVEKRFNLSWSIEGTRSRTGKMLPPKLGLMSYVADAYLDGRSDDILLQGVSICFDQLHEITEYAAYARGAEKTPEGLRWLYNFIKAQGERNFGKIYVRFPEAVSMRQYLGAPHGELTQDPAAKRLALQKMSFEVAWRILQATPVTATGLVSALLLTTRGTALTLDQLHHTLQDSLDYLERKQSPVSTSALRLRSREGVRAAADALSNGHPVTRVDSGREPVWYIAPDDEHAAAFYRNSVIHAFLETSIVELALAHAKHAEGDRVAAFWAQAMRLRDLLKFDFYFADSTAFRANIAQEMAWHQDWEDHLGVGGNEIDAMLYAKRPLMSDAMLRVFFEAYEIVADVLRDAPPDIGPEELTELALGLGRQFVAQGRVRSSEPVSTLLFATARQVAVDQELIAPAADLAERRVAFRRELRNILRDFDYVEQIARNQFVACEFKARQGRDRI</sequence>
<name>PLSB_MYCTA</name>
<dbReference type="EC" id="2.3.1.15" evidence="1"/>
<dbReference type="EMBL" id="CP000611">
    <property type="protein sequence ID" value="ABQ74278.1"/>
    <property type="molecule type" value="Genomic_DNA"/>
</dbReference>
<dbReference type="RefSeq" id="WP_003917012.1">
    <property type="nucleotide sequence ID" value="NZ_CP016972.1"/>
</dbReference>
<dbReference type="SMR" id="A5U5H8"/>
<dbReference type="KEGG" id="mra:MRA_2507"/>
<dbReference type="eggNOG" id="COG2937">
    <property type="taxonomic scope" value="Bacteria"/>
</dbReference>
<dbReference type="HOGENOM" id="CLU_015407_1_0_11"/>
<dbReference type="UniPathway" id="UPA00557">
    <property type="reaction ID" value="UER00612"/>
</dbReference>
<dbReference type="Proteomes" id="UP000001988">
    <property type="component" value="Chromosome"/>
</dbReference>
<dbReference type="GO" id="GO:0005886">
    <property type="term" value="C:plasma membrane"/>
    <property type="evidence" value="ECO:0007669"/>
    <property type="project" value="UniProtKB-SubCell"/>
</dbReference>
<dbReference type="GO" id="GO:0004366">
    <property type="term" value="F:glycerol-3-phosphate O-acyltransferase activity"/>
    <property type="evidence" value="ECO:0007669"/>
    <property type="project" value="UniProtKB-UniRule"/>
</dbReference>
<dbReference type="GO" id="GO:0016024">
    <property type="term" value="P:CDP-diacylglycerol biosynthetic process"/>
    <property type="evidence" value="ECO:0007669"/>
    <property type="project" value="UniProtKB-UniRule"/>
</dbReference>
<dbReference type="CDD" id="cd07993">
    <property type="entry name" value="LPLAT_DHAPAT-like"/>
    <property type="match status" value="1"/>
</dbReference>
<dbReference type="HAMAP" id="MF_00393">
    <property type="entry name" value="Glyc3P_acyltrans"/>
    <property type="match status" value="1"/>
</dbReference>
<dbReference type="InterPro" id="IPR022284">
    <property type="entry name" value="GPAT/DHAPAT"/>
</dbReference>
<dbReference type="InterPro" id="IPR045520">
    <property type="entry name" value="GPAT/DHAPAT_C"/>
</dbReference>
<dbReference type="InterPro" id="IPR041728">
    <property type="entry name" value="GPAT/DHAPAT_LPLAT"/>
</dbReference>
<dbReference type="InterPro" id="IPR028354">
    <property type="entry name" value="GPAT_PlsB"/>
</dbReference>
<dbReference type="InterPro" id="IPR002123">
    <property type="entry name" value="Plipid/glycerol_acylTrfase"/>
</dbReference>
<dbReference type="NCBIfam" id="NF002886">
    <property type="entry name" value="PRK03355.1"/>
    <property type="match status" value="1"/>
</dbReference>
<dbReference type="PANTHER" id="PTHR12563:SF17">
    <property type="entry name" value="DIHYDROXYACETONE PHOSPHATE ACYLTRANSFERASE"/>
    <property type="match status" value="1"/>
</dbReference>
<dbReference type="PANTHER" id="PTHR12563">
    <property type="entry name" value="GLYCEROL-3-PHOSPHATE ACYLTRANSFERASE"/>
    <property type="match status" value="1"/>
</dbReference>
<dbReference type="Pfam" id="PF01553">
    <property type="entry name" value="Acyltransferase"/>
    <property type="match status" value="1"/>
</dbReference>
<dbReference type="Pfam" id="PF19277">
    <property type="entry name" value="GPAT_C"/>
    <property type="match status" value="1"/>
</dbReference>
<dbReference type="PIRSF" id="PIRSF500064">
    <property type="entry name" value="GPAT"/>
    <property type="match status" value="1"/>
</dbReference>
<dbReference type="PIRSF" id="PIRSF000437">
    <property type="entry name" value="GPAT_DHAPAT"/>
    <property type="match status" value="1"/>
</dbReference>
<dbReference type="SMART" id="SM00563">
    <property type="entry name" value="PlsC"/>
    <property type="match status" value="1"/>
</dbReference>
<dbReference type="SUPFAM" id="SSF69593">
    <property type="entry name" value="Glycerol-3-phosphate (1)-acyltransferase"/>
    <property type="match status" value="1"/>
</dbReference>
<proteinExistence type="inferred from homology"/>
<feature type="chain" id="PRO_1000049439" description="Glycerol-3-phosphate acyltransferase">
    <location>
        <begin position="1"/>
        <end position="789"/>
    </location>
</feature>
<feature type="short sequence motif" description="HXXXXD motif">
    <location>
        <begin position="275"/>
        <end position="280"/>
    </location>
</feature>
<comment type="catalytic activity">
    <reaction evidence="1">
        <text>sn-glycerol 3-phosphate + an acyl-CoA = a 1-acyl-sn-glycero-3-phosphate + CoA</text>
        <dbReference type="Rhea" id="RHEA:15325"/>
        <dbReference type="ChEBI" id="CHEBI:57287"/>
        <dbReference type="ChEBI" id="CHEBI:57597"/>
        <dbReference type="ChEBI" id="CHEBI:57970"/>
        <dbReference type="ChEBI" id="CHEBI:58342"/>
        <dbReference type="EC" id="2.3.1.15"/>
    </reaction>
</comment>
<comment type="pathway">
    <text evidence="1">Phospholipid metabolism; CDP-diacylglycerol biosynthesis; CDP-diacylglycerol from sn-glycerol 3-phosphate: step 1/3.</text>
</comment>
<comment type="subcellular location">
    <subcellularLocation>
        <location evidence="1">Cell membrane</location>
        <topology evidence="1">Peripheral membrane protein</topology>
        <orientation evidence="1">Cytoplasmic side</orientation>
    </subcellularLocation>
</comment>
<comment type="domain">
    <text evidence="1">The HXXXXD motif is essential for acyltransferase activity and may constitute the binding site for the phosphate moiety of the glycerol-3-phosphate.</text>
</comment>
<comment type="similarity">
    <text evidence="1">Belongs to the GPAT/DAPAT family.</text>
</comment>
<protein>
    <recommendedName>
        <fullName evidence="1">Glycerol-3-phosphate acyltransferase</fullName>
        <shortName evidence="1">GPAT</shortName>
        <ecNumber evidence="1">2.3.1.15</ecNumber>
    </recommendedName>
</protein>